<sequence length="434" mass="48841">MFIDRAKIYVKAGDGGNGCIAFRREKFVPKGGPAGGDGGKGGDVIIEADENLDTLLDFHYKRHYYAERGEHGKGKNQKGKDGKDLVIKVPVGTLIFDVETGELLADLVSHGQRVVVAKGGKGGRGNAHFATSTRQTPYFAEKGEKGEERWLYLELKLLADVGLLGLPNAGKSTLLSRISNATPEIAPYPFTTKTPNLGVVEREDITFTVADIPGLIEGAHENKGMGDEFLRHIERTSVLVFVLDAADMVNPPQRAYEILKKELYLYSPKLLEKPRIIAINKIDLPEAQERIPEIEEWLKNEGVPYVFISAKEGINIDKLLELMEKYVKEKKESIPVVEIEKEIEELKQENKKQEIPEIIKEGDLWILKDKKTESLANKLDLYNPQAFSYFLNYAKRRGIIKLINRAKIKDDEEIKIGNYVFKYNSKNNSLELIE</sequence>
<evidence type="ECO:0000255" key="1">
    <source>
        <dbReference type="HAMAP-Rule" id="MF_01454"/>
    </source>
</evidence>
<evidence type="ECO:0000255" key="2">
    <source>
        <dbReference type="PROSITE-ProRule" id="PRU01229"/>
    </source>
</evidence>
<evidence type="ECO:0000255" key="3">
    <source>
        <dbReference type="PROSITE-ProRule" id="PRU01231"/>
    </source>
</evidence>
<gene>
    <name evidence="1" type="primary">obg</name>
    <name type="ordered locus">Dtur_1279</name>
</gene>
<proteinExistence type="inferred from homology"/>
<protein>
    <recommendedName>
        <fullName evidence="1">GTPase Obg</fullName>
        <ecNumber evidence="1">3.6.5.-</ecNumber>
    </recommendedName>
    <alternativeName>
        <fullName evidence="1">GTP-binding protein Obg</fullName>
    </alternativeName>
</protein>
<accession>B8E0B2</accession>
<reference key="1">
    <citation type="journal article" date="2016" name="Front. Microbiol.">
        <title>The complete genome sequence of hyperthermophile Dictyoglomus turgidum DSM 6724 reveals a specialized carbohydrate fermentor.</title>
        <authorList>
            <person name="Brumm P.J."/>
            <person name="Gowda K."/>
            <person name="Robb F.T."/>
            <person name="Mead D.A."/>
        </authorList>
    </citation>
    <scope>NUCLEOTIDE SEQUENCE [LARGE SCALE GENOMIC DNA]</scope>
    <source>
        <strain>DSM 6724 / Z-1310</strain>
    </source>
</reference>
<organism>
    <name type="scientific">Dictyoglomus turgidum (strain DSM 6724 / Z-1310)</name>
    <dbReference type="NCBI Taxonomy" id="515635"/>
    <lineage>
        <taxon>Bacteria</taxon>
        <taxon>Pseudomonadati</taxon>
        <taxon>Dictyoglomota</taxon>
        <taxon>Dictyoglomia</taxon>
        <taxon>Dictyoglomales</taxon>
        <taxon>Dictyoglomaceae</taxon>
        <taxon>Dictyoglomus</taxon>
    </lineage>
</organism>
<feature type="chain" id="PRO_0000385897" description="GTPase Obg">
    <location>
        <begin position="1"/>
        <end position="434"/>
    </location>
</feature>
<feature type="domain" description="Obg" evidence="3">
    <location>
        <begin position="1"/>
        <end position="158"/>
    </location>
</feature>
<feature type="domain" description="OBG-type G" evidence="1">
    <location>
        <begin position="159"/>
        <end position="328"/>
    </location>
</feature>
<feature type="domain" description="OCT" evidence="2">
    <location>
        <begin position="347"/>
        <end position="425"/>
    </location>
</feature>
<feature type="binding site" evidence="1">
    <location>
        <begin position="165"/>
        <end position="172"/>
    </location>
    <ligand>
        <name>GTP</name>
        <dbReference type="ChEBI" id="CHEBI:37565"/>
    </ligand>
</feature>
<feature type="binding site" evidence="1">
    <location>
        <position position="172"/>
    </location>
    <ligand>
        <name>Mg(2+)</name>
        <dbReference type="ChEBI" id="CHEBI:18420"/>
    </ligand>
</feature>
<feature type="binding site" evidence="1">
    <location>
        <begin position="190"/>
        <end position="194"/>
    </location>
    <ligand>
        <name>GTP</name>
        <dbReference type="ChEBI" id="CHEBI:37565"/>
    </ligand>
</feature>
<feature type="binding site" evidence="1">
    <location>
        <position position="192"/>
    </location>
    <ligand>
        <name>Mg(2+)</name>
        <dbReference type="ChEBI" id="CHEBI:18420"/>
    </ligand>
</feature>
<feature type="binding site" evidence="1">
    <location>
        <begin position="211"/>
        <end position="214"/>
    </location>
    <ligand>
        <name>GTP</name>
        <dbReference type="ChEBI" id="CHEBI:37565"/>
    </ligand>
</feature>
<feature type="binding site" evidence="1">
    <location>
        <begin position="280"/>
        <end position="283"/>
    </location>
    <ligand>
        <name>GTP</name>
        <dbReference type="ChEBI" id="CHEBI:37565"/>
    </ligand>
</feature>
<feature type="binding site" evidence="1">
    <location>
        <begin position="309"/>
        <end position="311"/>
    </location>
    <ligand>
        <name>GTP</name>
        <dbReference type="ChEBI" id="CHEBI:37565"/>
    </ligand>
</feature>
<comment type="function">
    <text evidence="1">An essential GTPase which binds GTP, GDP and possibly (p)ppGpp with moderate affinity, with high nucleotide exchange rates and a fairly low GTP hydrolysis rate. Plays a role in control of the cell cycle, stress response, ribosome biogenesis and in those bacteria that undergo differentiation, in morphogenesis control.</text>
</comment>
<comment type="cofactor">
    <cofactor evidence="1">
        <name>Mg(2+)</name>
        <dbReference type="ChEBI" id="CHEBI:18420"/>
    </cofactor>
</comment>
<comment type="subunit">
    <text evidence="1">Monomer.</text>
</comment>
<comment type="subcellular location">
    <subcellularLocation>
        <location evidence="1">Cytoplasm</location>
    </subcellularLocation>
</comment>
<comment type="similarity">
    <text evidence="1">Belongs to the TRAFAC class OBG-HflX-like GTPase superfamily. OBG GTPase family.</text>
</comment>
<keyword id="KW-0963">Cytoplasm</keyword>
<keyword id="KW-0342">GTP-binding</keyword>
<keyword id="KW-0378">Hydrolase</keyword>
<keyword id="KW-0460">Magnesium</keyword>
<keyword id="KW-0479">Metal-binding</keyword>
<keyword id="KW-0547">Nucleotide-binding</keyword>
<keyword id="KW-1185">Reference proteome</keyword>
<name>OBG_DICTD</name>
<dbReference type="EC" id="3.6.5.-" evidence="1"/>
<dbReference type="EMBL" id="CP001251">
    <property type="protein sequence ID" value="ACK42557.1"/>
    <property type="molecule type" value="Genomic_DNA"/>
</dbReference>
<dbReference type="RefSeq" id="YP_002353171.1">
    <property type="nucleotide sequence ID" value="NC_011661.1"/>
</dbReference>
<dbReference type="SMR" id="B8E0B2"/>
<dbReference type="FunCoup" id="B8E0B2">
    <property type="interactions" value="330"/>
</dbReference>
<dbReference type="STRING" id="515635.Dtur_1279"/>
<dbReference type="EnsemblBacteria" id="ACK42557">
    <property type="protein sequence ID" value="ACK42557"/>
    <property type="gene ID" value="Dtur_1279"/>
</dbReference>
<dbReference type="KEGG" id="dtu:Dtur_1279"/>
<dbReference type="PATRIC" id="fig|515635.4.peg.1319"/>
<dbReference type="eggNOG" id="COG0536">
    <property type="taxonomic scope" value="Bacteria"/>
</dbReference>
<dbReference type="HOGENOM" id="CLU_011747_2_1_0"/>
<dbReference type="InParanoid" id="B8E0B2"/>
<dbReference type="OrthoDB" id="9807318at2"/>
<dbReference type="Proteomes" id="UP000007719">
    <property type="component" value="Chromosome"/>
</dbReference>
<dbReference type="GO" id="GO:0005737">
    <property type="term" value="C:cytoplasm"/>
    <property type="evidence" value="ECO:0007669"/>
    <property type="project" value="UniProtKB-SubCell"/>
</dbReference>
<dbReference type="GO" id="GO:0005525">
    <property type="term" value="F:GTP binding"/>
    <property type="evidence" value="ECO:0000318"/>
    <property type="project" value="GO_Central"/>
</dbReference>
<dbReference type="GO" id="GO:0003924">
    <property type="term" value="F:GTPase activity"/>
    <property type="evidence" value="ECO:0000318"/>
    <property type="project" value="GO_Central"/>
</dbReference>
<dbReference type="GO" id="GO:0000287">
    <property type="term" value="F:magnesium ion binding"/>
    <property type="evidence" value="ECO:0007669"/>
    <property type="project" value="InterPro"/>
</dbReference>
<dbReference type="GO" id="GO:0042254">
    <property type="term" value="P:ribosome biogenesis"/>
    <property type="evidence" value="ECO:0007669"/>
    <property type="project" value="UniProtKB-UniRule"/>
</dbReference>
<dbReference type="CDD" id="cd01898">
    <property type="entry name" value="Obg"/>
    <property type="match status" value="1"/>
</dbReference>
<dbReference type="FunFam" id="2.70.210.12:FF:000001">
    <property type="entry name" value="GTPase Obg"/>
    <property type="match status" value="1"/>
</dbReference>
<dbReference type="Gene3D" id="3.30.300.350">
    <property type="entry name" value="GTP-binding protein OBG, C-terminal domain"/>
    <property type="match status" value="1"/>
</dbReference>
<dbReference type="Gene3D" id="2.70.210.12">
    <property type="entry name" value="GTP1/OBG domain"/>
    <property type="match status" value="1"/>
</dbReference>
<dbReference type="Gene3D" id="3.40.50.300">
    <property type="entry name" value="P-loop containing nucleotide triphosphate hydrolases"/>
    <property type="match status" value="1"/>
</dbReference>
<dbReference type="HAMAP" id="MF_01454">
    <property type="entry name" value="GTPase_Obg"/>
    <property type="match status" value="1"/>
</dbReference>
<dbReference type="InterPro" id="IPR031167">
    <property type="entry name" value="G_OBG"/>
</dbReference>
<dbReference type="InterPro" id="IPR006073">
    <property type="entry name" value="GTP-bd"/>
</dbReference>
<dbReference type="InterPro" id="IPR014100">
    <property type="entry name" value="GTP-bd_Obg/CgtA"/>
</dbReference>
<dbReference type="InterPro" id="IPR036346">
    <property type="entry name" value="GTP-bd_prot_GTP1/OBG_C_sf"/>
</dbReference>
<dbReference type="InterPro" id="IPR006169">
    <property type="entry name" value="GTP1_OBG_dom"/>
</dbReference>
<dbReference type="InterPro" id="IPR036726">
    <property type="entry name" value="GTP1_OBG_dom_sf"/>
</dbReference>
<dbReference type="InterPro" id="IPR045086">
    <property type="entry name" value="OBG_GTPase"/>
</dbReference>
<dbReference type="InterPro" id="IPR015349">
    <property type="entry name" value="OCT_dom"/>
</dbReference>
<dbReference type="InterPro" id="IPR027417">
    <property type="entry name" value="P-loop_NTPase"/>
</dbReference>
<dbReference type="InterPro" id="IPR005225">
    <property type="entry name" value="Small_GTP-bd"/>
</dbReference>
<dbReference type="NCBIfam" id="TIGR02729">
    <property type="entry name" value="Obg_CgtA"/>
    <property type="match status" value="1"/>
</dbReference>
<dbReference type="NCBIfam" id="NF008954">
    <property type="entry name" value="PRK12296.1"/>
    <property type="match status" value="1"/>
</dbReference>
<dbReference type="NCBIfam" id="NF008955">
    <property type="entry name" value="PRK12297.1"/>
    <property type="match status" value="1"/>
</dbReference>
<dbReference type="NCBIfam" id="NF008956">
    <property type="entry name" value="PRK12299.1"/>
    <property type="match status" value="1"/>
</dbReference>
<dbReference type="NCBIfam" id="TIGR00231">
    <property type="entry name" value="small_GTP"/>
    <property type="match status" value="1"/>
</dbReference>
<dbReference type="PANTHER" id="PTHR11702">
    <property type="entry name" value="DEVELOPMENTALLY REGULATED GTP-BINDING PROTEIN-RELATED"/>
    <property type="match status" value="1"/>
</dbReference>
<dbReference type="PANTHER" id="PTHR11702:SF31">
    <property type="entry name" value="MITOCHONDRIAL RIBOSOME-ASSOCIATED GTPASE 2"/>
    <property type="match status" value="1"/>
</dbReference>
<dbReference type="Pfam" id="PF09269">
    <property type="entry name" value="DUF1967"/>
    <property type="match status" value="1"/>
</dbReference>
<dbReference type="Pfam" id="PF01018">
    <property type="entry name" value="GTP1_OBG"/>
    <property type="match status" value="1"/>
</dbReference>
<dbReference type="Pfam" id="PF01926">
    <property type="entry name" value="MMR_HSR1"/>
    <property type="match status" value="1"/>
</dbReference>
<dbReference type="PIRSF" id="PIRSF002401">
    <property type="entry name" value="GTP_bd_Obg/CgtA"/>
    <property type="match status" value="1"/>
</dbReference>
<dbReference type="PRINTS" id="PR00326">
    <property type="entry name" value="GTP1OBG"/>
</dbReference>
<dbReference type="SUPFAM" id="SSF102741">
    <property type="entry name" value="Obg GTP-binding protein C-terminal domain"/>
    <property type="match status" value="1"/>
</dbReference>
<dbReference type="SUPFAM" id="SSF82051">
    <property type="entry name" value="Obg GTP-binding protein N-terminal domain"/>
    <property type="match status" value="1"/>
</dbReference>
<dbReference type="SUPFAM" id="SSF52540">
    <property type="entry name" value="P-loop containing nucleoside triphosphate hydrolases"/>
    <property type="match status" value="1"/>
</dbReference>
<dbReference type="PROSITE" id="PS51710">
    <property type="entry name" value="G_OBG"/>
    <property type="match status" value="1"/>
</dbReference>
<dbReference type="PROSITE" id="PS51883">
    <property type="entry name" value="OBG"/>
    <property type="match status" value="1"/>
</dbReference>
<dbReference type="PROSITE" id="PS51881">
    <property type="entry name" value="OCT"/>
    <property type="match status" value="1"/>
</dbReference>